<dbReference type="EC" id="2.1.3.2" evidence="1"/>
<dbReference type="EMBL" id="CP001219">
    <property type="protein sequence ID" value="ACK80050.1"/>
    <property type="molecule type" value="Genomic_DNA"/>
</dbReference>
<dbReference type="RefSeq" id="WP_012537572.1">
    <property type="nucleotide sequence ID" value="NC_011761.1"/>
</dbReference>
<dbReference type="SMR" id="B7JAG8"/>
<dbReference type="STRING" id="243159.AFE_3059"/>
<dbReference type="PaxDb" id="243159-AFE_3059"/>
<dbReference type="GeneID" id="65282059"/>
<dbReference type="KEGG" id="afr:AFE_3059"/>
<dbReference type="eggNOG" id="COG0540">
    <property type="taxonomic scope" value="Bacteria"/>
</dbReference>
<dbReference type="HOGENOM" id="CLU_043846_2_0_6"/>
<dbReference type="UniPathway" id="UPA00070">
    <property type="reaction ID" value="UER00116"/>
</dbReference>
<dbReference type="Proteomes" id="UP000001362">
    <property type="component" value="Chromosome"/>
</dbReference>
<dbReference type="GO" id="GO:0005829">
    <property type="term" value="C:cytosol"/>
    <property type="evidence" value="ECO:0007669"/>
    <property type="project" value="TreeGrafter"/>
</dbReference>
<dbReference type="GO" id="GO:0016597">
    <property type="term" value="F:amino acid binding"/>
    <property type="evidence" value="ECO:0007669"/>
    <property type="project" value="InterPro"/>
</dbReference>
<dbReference type="GO" id="GO:0004070">
    <property type="term" value="F:aspartate carbamoyltransferase activity"/>
    <property type="evidence" value="ECO:0007669"/>
    <property type="project" value="UniProtKB-UniRule"/>
</dbReference>
<dbReference type="GO" id="GO:0006207">
    <property type="term" value="P:'de novo' pyrimidine nucleobase biosynthetic process"/>
    <property type="evidence" value="ECO:0007669"/>
    <property type="project" value="InterPro"/>
</dbReference>
<dbReference type="GO" id="GO:0044205">
    <property type="term" value="P:'de novo' UMP biosynthetic process"/>
    <property type="evidence" value="ECO:0007669"/>
    <property type="project" value="UniProtKB-UniRule"/>
</dbReference>
<dbReference type="GO" id="GO:0006520">
    <property type="term" value="P:amino acid metabolic process"/>
    <property type="evidence" value="ECO:0007669"/>
    <property type="project" value="InterPro"/>
</dbReference>
<dbReference type="FunFam" id="3.40.50.1370:FF:000007">
    <property type="entry name" value="Aspartate carbamoyltransferase"/>
    <property type="match status" value="1"/>
</dbReference>
<dbReference type="Gene3D" id="3.40.50.1370">
    <property type="entry name" value="Aspartate/ornithine carbamoyltransferase"/>
    <property type="match status" value="2"/>
</dbReference>
<dbReference type="HAMAP" id="MF_00001">
    <property type="entry name" value="Asp_carb_tr"/>
    <property type="match status" value="1"/>
</dbReference>
<dbReference type="InterPro" id="IPR006132">
    <property type="entry name" value="Asp/Orn_carbamoyltranf_P-bd"/>
</dbReference>
<dbReference type="InterPro" id="IPR006130">
    <property type="entry name" value="Asp/Orn_carbamoylTrfase"/>
</dbReference>
<dbReference type="InterPro" id="IPR036901">
    <property type="entry name" value="Asp/Orn_carbamoylTrfase_sf"/>
</dbReference>
<dbReference type="InterPro" id="IPR002082">
    <property type="entry name" value="Asp_carbamoyltransf"/>
</dbReference>
<dbReference type="InterPro" id="IPR006131">
    <property type="entry name" value="Asp_carbamoyltransf_Asp/Orn-bd"/>
</dbReference>
<dbReference type="NCBIfam" id="TIGR00670">
    <property type="entry name" value="asp_carb_tr"/>
    <property type="match status" value="1"/>
</dbReference>
<dbReference type="NCBIfam" id="NF002032">
    <property type="entry name" value="PRK00856.1"/>
    <property type="match status" value="1"/>
</dbReference>
<dbReference type="PANTHER" id="PTHR45753:SF6">
    <property type="entry name" value="ASPARTATE CARBAMOYLTRANSFERASE"/>
    <property type="match status" value="1"/>
</dbReference>
<dbReference type="PANTHER" id="PTHR45753">
    <property type="entry name" value="ORNITHINE CARBAMOYLTRANSFERASE, MITOCHONDRIAL"/>
    <property type="match status" value="1"/>
</dbReference>
<dbReference type="Pfam" id="PF00185">
    <property type="entry name" value="OTCace"/>
    <property type="match status" value="1"/>
</dbReference>
<dbReference type="Pfam" id="PF02729">
    <property type="entry name" value="OTCace_N"/>
    <property type="match status" value="1"/>
</dbReference>
<dbReference type="PRINTS" id="PR00100">
    <property type="entry name" value="AOTCASE"/>
</dbReference>
<dbReference type="PRINTS" id="PR00101">
    <property type="entry name" value="ATCASE"/>
</dbReference>
<dbReference type="SUPFAM" id="SSF53671">
    <property type="entry name" value="Aspartate/ornithine carbamoyltransferase"/>
    <property type="match status" value="1"/>
</dbReference>
<dbReference type="PROSITE" id="PS00097">
    <property type="entry name" value="CARBAMOYLTRANSFERASE"/>
    <property type="match status" value="1"/>
</dbReference>
<organism>
    <name type="scientific">Acidithiobacillus ferrooxidans (strain ATCC 23270 / DSM 14882 / CIP 104768 / NCIMB 8455)</name>
    <name type="common">Ferrobacillus ferrooxidans (strain ATCC 23270)</name>
    <dbReference type="NCBI Taxonomy" id="243159"/>
    <lineage>
        <taxon>Bacteria</taxon>
        <taxon>Pseudomonadati</taxon>
        <taxon>Pseudomonadota</taxon>
        <taxon>Acidithiobacillia</taxon>
        <taxon>Acidithiobacillales</taxon>
        <taxon>Acidithiobacillaceae</taxon>
        <taxon>Acidithiobacillus</taxon>
    </lineage>
</organism>
<accession>B7JAG8</accession>
<comment type="function">
    <text evidence="1">Catalyzes the condensation of carbamoyl phosphate and aspartate to form carbamoyl aspartate and inorganic phosphate, the committed step in the de novo pyrimidine nucleotide biosynthesis pathway.</text>
</comment>
<comment type="catalytic activity">
    <reaction evidence="1">
        <text>carbamoyl phosphate + L-aspartate = N-carbamoyl-L-aspartate + phosphate + H(+)</text>
        <dbReference type="Rhea" id="RHEA:20013"/>
        <dbReference type="ChEBI" id="CHEBI:15378"/>
        <dbReference type="ChEBI" id="CHEBI:29991"/>
        <dbReference type="ChEBI" id="CHEBI:32814"/>
        <dbReference type="ChEBI" id="CHEBI:43474"/>
        <dbReference type="ChEBI" id="CHEBI:58228"/>
        <dbReference type="EC" id="2.1.3.2"/>
    </reaction>
</comment>
<comment type="pathway">
    <text evidence="1">Pyrimidine metabolism; UMP biosynthesis via de novo pathway; (S)-dihydroorotate from bicarbonate: step 2/3.</text>
</comment>
<comment type="subunit">
    <text evidence="1">Heterododecamer (2C3:3R2) of six catalytic PyrB chains organized as two trimers (C3), and six regulatory PyrI chains organized as three dimers (R2).</text>
</comment>
<comment type="similarity">
    <text evidence="1">Belongs to the aspartate/ornithine carbamoyltransferase superfamily. ATCase family.</text>
</comment>
<feature type="chain" id="PRO_1000116119" description="Aspartate carbamoyltransferase catalytic subunit">
    <location>
        <begin position="1"/>
        <end position="327"/>
    </location>
</feature>
<feature type="binding site" evidence="1">
    <location>
        <position position="73"/>
    </location>
    <ligand>
        <name>carbamoyl phosphate</name>
        <dbReference type="ChEBI" id="CHEBI:58228"/>
    </ligand>
</feature>
<feature type="binding site" evidence="1">
    <location>
        <position position="74"/>
    </location>
    <ligand>
        <name>carbamoyl phosphate</name>
        <dbReference type="ChEBI" id="CHEBI:58228"/>
    </ligand>
</feature>
<feature type="binding site" evidence="1">
    <location>
        <position position="101"/>
    </location>
    <ligand>
        <name>L-aspartate</name>
        <dbReference type="ChEBI" id="CHEBI:29991"/>
    </ligand>
</feature>
<feature type="binding site" evidence="1">
    <location>
        <position position="123"/>
    </location>
    <ligand>
        <name>carbamoyl phosphate</name>
        <dbReference type="ChEBI" id="CHEBI:58228"/>
    </ligand>
</feature>
<feature type="binding site" evidence="1">
    <location>
        <position position="153"/>
    </location>
    <ligand>
        <name>carbamoyl phosphate</name>
        <dbReference type="ChEBI" id="CHEBI:58228"/>
    </ligand>
</feature>
<feature type="binding site" evidence="1">
    <location>
        <position position="156"/>
    </location>
    <ligand>
        <name>carbamoyl phosphate</name>
        <dbReference type="ChEBI" id="CHEBI:58228"/>
    </ligand>
</feature>
<feature type="binding site" evidence="1">
    <location>
        <position position="186"/>
    </location>
    <ligand>
        <name>L-aspartate</name>
        <dbReference type="ChEBI" id="CHEBI:29991"/>
    </ligand>
</feature>
<feature type="binding site" evidence="1">
    <location>
        <position position="241"/>
    </location>
    <ligand>
        <name>L-aspartate</name>
        <dbReference type="ChEBI" id="CHEBI:29991"/>
    </ligand>
</feature>
<feature type="binding site" evidence="1">
    <location>
        <position position="282"/>
    </location>
    <ligand>
        <name>carbamoyl phosphate</name>
        <dbReference type="ChEBI" id="CHEBI:58228"/>
    </ligand>
</feature>
<feature type="binding site" evidence="1">
    <location>
        <position position="283"/>
    </location>
    <ligand>
        <name>carbamoyl phosphate</name>
        <dbReference type="ChEBI" id="CHEBI:58228"/>
    </ligand>
</feature>
<protein>
    <recommendedName>
        <fullName evidence="1">Aspartate carbamoyltransferase catalytic subunit</fullName>
        <ecNumber evidence="1">2.1.3.2</ecNumber>
    </recommendedName>
    <alternativeName>
        <fullName evidence="1">Aspartate transcarbamylase</fullName>
        <shortName evidence="1">ATCase</shortName>
    </alternativeName>
</protein>
<keyword id="KW-0665">Pyrimidine biosynthesis</keyword>
<keyword id="KW-1185">Reference proteome</keyword>
<keyword id="KW-0808">Transferase</keyword>
<proteinExistence type="inferred from homology"/>
<name>PYRB_ACIF2</name>
<reference key="1">
    <citation type="journal article" date="2008" name="BMC Genomics">
        <title>Acidithiobacillus ferrooxidans metabolism: from genome sequence to industrial applications.</title>
        <authorList>
            <person name="Valdes J."/>
            <person name="Pedroso I."/>
            <person name="Quatrini R."/>
            <person name="Dodson R.J."/>
            <person name="Tettelin H."/>
            <person name="Blake R. II"/>
            <person name="Eisen J.A."/>
            <person name="Holmes D.S."/>
        </authorList>
    </citation>
    <scope>NUCLEOTIDE SEQUENCE [LARGE SCALE GENOMIC DNA]</scope>
    <source>
        <strain>ATCC 23270 / DSM 14882 / CIP 104768 / NCIMB 8455</strain>
    </source>
</reference>
<evidence type="ECO:0000255" key="1">
    <source>
        <dbReference type="HAMAP-Rule" id="MF_00001"/>
    </source>
</evidence>
<sequence>MSATLRFGEGNLQYDAQGRLRHLLSTEGLRERELLQILDTAESFLSIANRSVKKTPTLRGRTIANLFFENSTRTRSTFELAAKRLSADVLNIAVSTSSASKGESLTDTIDNLMAMQVDGFVIRHPEAGAAHLVARHLGDSALVVNAGDGQHAHPTQALLDVFTIRRLGGPIEDRVVAIVGDVFHSRVARSQIHALSVLGCPEIRVIGPRTLVPEELSALGVHVYHDLQAGLRGVDVICALRLQRERMESHRLPSLDEFHRRFGLTPERLQWAEPGALVLHPGPMNRGVEIASEVADGAQAVILQQVAHGLAVRMAVLAILAGAAGGA</sequence>
<gene>
    <name evidence="1" type="primary">pyrB</name>
    <name type="ordered locus">AFE_3059</name>
</gene>